<name>HBA_VULVU</name>
<proteinExistence type="evidence at protein level"/>
<reference key="1">
    <citation type="journal article" date="1991" name="Biol. Chem. Hoppe-Seyler">
        <title>Carnivora: the primary structure of the hemoglobin from the silver fox (Vulpes vulpes var., Canidae).</title>
        <authorList>
            <person name="He C."/>
            <person name="Braunitzer G."/>
        </authorList>
    </citation>
    <scope>PROTEIN SEQUENCE</scope>
    <source>
        <strain>Subsp. fulvus / Silver fox</strain>
    </source>
</reference>
<feature type="chain" id="PRO_0000052804" description="Hemoglobin subunit alpha">
    <location>
        <begin position="1"/>
        <end position="141"/>
    </location>
</feature>
<feature type="peptide" id="PRO_0000455960" description="Hemopressin" evidence="2">
    <location>
        <begin position="95"/>
        <end position="103"/>
    </location>
</feature>
<feature type="domain" description="Globin" evidence="4">
    <location>
        <begin position="1"/>
        <end position="141"/>
    </location>
</feature>
<feature type="binding site" evidence="4">
    <location>
        <position position="58"/>
    </location>
    <ligand>
        <name>O2</name>
        <dbReference type="ChEBI" id="CHEBI:15379"/>
    </ligand>
</feature>
<feature type="binding site" description="proximal binding residue" evidence="4">
    <location>
        <position position="87"/>
    </location>
    <ligand>
        <name>heme b</name>
        <dbReference type="ChEBI" id="CHEBI:60344"/>
    </ligand>
    <ligandPart>
        <name>Fe</name>
        <dbReference type="ChEBI" id="CHEBI:18248"/>
    </ligandPart>
</feature>
<feature type="modified residue" description="Phosphoserine" evidence="3">
    <location>
        <position position="3"/>
    </location>
</feature>
<feature type="modified residue" description="N6-succinyllysine" evidence="1">
    <location>
        <position position="7"/>
    </location>
</feature>
<feature type="modified residue" description="Phosphothreonine" evidence="3">
    <location>
        <position position="8"/>
    </location>
</feature>
<feature type="modified residue" description="N6-succinyllysine" evidence="1">
    <location>
        <position position="11"/>
    </location>
</feature>
<feature type="modified residue" description="N6-acetyllysine; alternate" evidence="3">
    <location>
        <position position="16"/>
    </location>
</feature>
<feature type="modified residue" description="N6-succinyllysine; alternate" evidence="1">
    <location>
        <position position="16"/>
    </location>
</feature>
<feature type="modified residue" description="Phosphotyrosine" evidence="3">
    <location>
        <position position="24"/>
    </location>
</feature>
<feature type="modified residue" description="Phosphoserine" evidence="3">
    <location>
        <position position="35"/>
    </location>
</feature>
<feature type="modified residue" description="N6-succinyllysine" evidence="1">
    <location>
        <position position="40"/>
    </location>
</feature>
<feature type="modified residue" description="Phosphoserine" evidence="3">
    <location>
        <position position="49"/>
    </location>
</feature>
<feature type="modified residue" description="Phosphoserine" evidence="1">
    <location>
        <position position="102"/>
    </location>
</feature>
<feature type="modified residue" description="Phosphothreonine" evidence="1">
    <location>
        <position position="108"/>
    </location>
</feature>
<feature type="modified residue" description="Phosphoserine" evidence="1">
    <location>
        <position position="124"/>
    </location>
</feature>
<feature type="modified residue" description="Phosphothreonine" evidence="1">
    <location>
        <position position="134"/>
    </location>
</feature>
<feature type="modified residue" description="Phosphothreonine" evidence="1">
    <location>
        <position position="137"/>
    </location>
</feature>
<feature type="modified residue" description="Phosphoserine" evidence="1">
    <location>
        <position position="138"/>
    </location>
</feature>
<evidence type="ECO:0000250" key="1">
    <source>
        <dbReference type="UniProtKB" id="P01942"/>
    </source>
</evidence>
<evidence type="ECO:0000250" key="2">
    <source>
        <dbReference type="UniProtKB" id="P01946"/>
    </source>
</evidence>
<evidence type="ECO:0000250" key="3">
    <source>
        <dbReference type="UniProtKB" id="P69905"/>
    </source>
</evidence>
<evidence type="ECO:0000255" key="4">
    <source>
        <dbReference type="PROSITE-ProRule" id="PRU00238"/>
    </source>
</evidence>
<organism>
    <name type="scientific">Vulpes vulpes</name>
    <name type="common">Red fox</name>
    <dbReference type="NCBI Taxonomy" id="9627"/>
    <lineage>
        <taxon>Eukaryota</taxon>
        <taxon>Metazoa</taxon>
        <taxon>Chordata</taxon>
        <taxon>Craniata</taxon>
        <taxon>Vertebrata</taxon>
        <taxon>Euteleostomi</taxon>
        <taxon>Mammalia</taxon>
        <taxon>Eutheria</taxon>
        <taxon>Laurasiatheria</taxon>
        <taxon>Carnivora</taxon>
        <taxon>Caniformia</taxon>
        <taxon>Canidae</taxon>
        <taxon>Vulpes</taxon>
    </lineage>
</organism>
<keyword id="KW-0007">Acetylation</keyword>
<keyword id="KW-0903">Direct protein sequencing</keyword>
<keyword id="KW-0349">Heme</keyword>
<keyword id="KW-0408">Iron</keyword>
<keyword id="KW-0479">Metal-binding</keyword>
<keyword id="KW-0561">Oxygen transport</keyword>
<keyword id="KW-0597">Phosphoprotein</keyword>
<keyword id="KW-1185">Reference proteome</keyword>
<keyword id="KW-0813">Transport</keyword>
<comment type="function">
    <text>Involved in oxygen transport from the lung to the various peripheral tissues.</text>
</comment>
<comment type="function">
    <molecule>Hemopressin</molecule>
    <text evidence="2">Hemopressin acts as an antagonist peptide of the cannabinoid receptor CNR1. Hemopressin-binding efficiently blocks cannabinoid receptor CNR1 and subsequent signaling.</text>
</comment>
<comment type="subunit">
    <text>Heterotetramer of two alpha chains and two beta chains.</text>
</comment>
<comment type="tissue specificity">
    <text>Red blood cells.</text>
</comment>
<comment type="similarity">
    <text evidence="4">Belongs to the globin family.</text>
</comment>
<sequence length="141" mass="15260">VLSPADKTNIKSTWDKIGGHAGDYGGEALDRTFQSFPTTKTYFPHFDLSPGSAQVKAHGKKVADALTTAVAHLDDLPGALSALSDLHAYKLRVDPVNFKLLSHCLLVTLACHHPNEFTPAVHASLDKFFTAVSTVLTSKYR</sequence>
<gene>
    <name type="primary">HBA</name>
</gene>
<dbReference type="PIR" id="S13456">
    <property type="entry name" value="S13456"/>
</dbReference>
<dbReference type="SMR" id="P21200"/>
<dbReference type="Ensembl" id="ENSVVUT00000024152">
    <property type="protein sequence ID" value="ENSVVUP00000018293"/>
    <property type="gene ID" value="ENSVVUG00000013465"/>
</dbReference>
<dbReference type="OMA" id="MFTSFPT"/>
<dbReference type="Proteomes" id="UP000286640">
    <property type="component" value="Unplaced"/>
</dbReference>
<dbReference type="GO" id="GO:0072562">
    <property type="term" value="C:blood microparticle"/>
    <property type="evidence" value="ECO:0007669"/>
    <property type="project" value="TreeGrafter"/>
</dbReference>
<dbReference type="GO" id="GO:0031838">
    <property type="term" value="C:haptoglobin-hemoglobin complex"/>
    <property type="evidence" value="ECO:0007669"/>
    <property type="project" value="TreeGrafter"/>
</dbReference>
<dbReference type="GO" id="GO:0005833">
    <property type="term" value="C:hemoglobin complex"/>
    <property type="evidence" value="ECO:0007669"/>
    <property type="project" value="InterPro"/>
</dbReference>
<dbReference type="GO" id="GO:0031720">
    <property type="term" value="F:haptoglobin binding"/>
    <property type="evidence" value="ECO:0007669"/>
    <property type="project" value="TreeGrafter"/>
</dbReference>
<dbReference type="GO" id="GO:0020037">
    <property type="term" value="F:heme binding"/>
    <property type="evidence" value="ECO:0007669"/>
    <property type="project" value="InterPro"/>
</dbReference>
<dbReference type="GO" id="GO:0005506">
    <property type="term" value="F:iron ion binding"/>
    <property type="evidence" value="ECO:0007669"/>
    <property type="project" value="InterPro"/>
</dbReference>
<dbReference type="GO" id="GO:0043177">
    <property type="term" value="F:organic acid binding"/>
    <property type="evidence" value="ECO:0007669"/>
    <property type="project" value="TreeGrafter"/>
</dbReference>
<dbReference type="GO" id="GO:0019825">
    <property type="term" value="F:oxygen binding"/>
    <property type="evidence" value="ECO:0007669"/>
    <property type="project" value="InterPro"/>
</dbReference>
<dbReference type="GO" id="GO:0005344">
    <property type="term" value="F:oxygen carrier activity"/>
    <property type="evidence" value="ECO:0007669"/>
    <property type="project" value="UniProtKB-KW"/>
</dbReference>
<dbReference type="GO" id="GO:0004601">
    <property type="term" value="F:peroxidase activity"/>
    <property type="evidence" value="ECO:0007669"/>
    <property type="project" value="TreeGrafter"/>
</dbReference>
<dbReference type="GO" id="GO:0042744">
    <property type="term" value="P:hydrogen peroxide catabolic process"/>
    <property type="evidence" value="ECO:0007669"/>
    <property type="project" value="TreeGrafter"/>
</dbReference>
<dbReference type="CDD" id="cd08927">
    <property type="entry name" value="Hb-alpha-like"/>
    <property type="match status" value="1"/>
</dbReference>
<dbReference type="FunFam" id="1.10.490.10:FF:000002">
    <property type="entry name" value="Hemoglobin subunit alpha"/>
    <property type="match status" value="1"/>
</dbReference>
<dbReference type="Gene3D" id="1.10.490.10">
    <property type="entry name" value="Globins"/>
    <property type="match status" value="1"/>
</dbReference>
<dbReference type="InterPro" id="IPR000971">
    <property type="entry name" value="Globin"/>
</dbReference>
<dbReference type="InterPro" id="IPR009050">
    <property type="entry name" value="Globin-like_sf"/>
</dbReference>
<dbReference type="InterPro" id="IPR012292">
    <property type="entry name" value="Globin/Proto"/>
</dbReference>
<dbReference type="InterPro" id="IPR002338">
    <property type="entry name" value="Hemoglobin_a-typ"/>
</dbReference>
<dbReference type="InterPro" id="IPR050056">
    <property type="entry name" value="Hemoglobin_oxygen_transport"/>
</dbReference>
<dbReference type="InterPro" id="IPR002339">
    <property type="entry name" value="Hemoglobin_pi"/>
</dbReference>
<dbReference type="PANTHER" id="PTHR11442">
    <property type="entry name" value="HEMOGLOBIN FAMILY MEMBER"/>
    <property type="match status" value="1"/>
</dbReference>
<dbReference type="PANTHER" id="PTHR11442:SF48">
    <property type="entry name" value="HEMOGLOBIN SUBUNIT ALPHA"/>
    <property type="match status" value="1"/>
</dbReference>
<dbReference type="Pfam" id="PF00042">
    <property type="entry name" value="Globin"/>
    <property type="match status" value="1"/>
</dbReference>
<dbReference type="PRINTS" id="PR00612">
    <property type="entry name" value="ALPHAHAEM"/>
</dbReference>
<dbReference type="PRINTS" id="PR00815">
    <property type="entry name" value="PIHAEM"/>
</dbReference>
<dbReference type="SUPFAM" id="SSF46458">
    <property type="entry name" value="Globin-like"/>
    <property type="match status" value="1"/>
</dbReference>
<dbReference type="PROSITE" id="PS01033">
    <property type="entry name" value="GLOBIN"/>
    <property type="match status" value="1"/>
</dbReference>
<protein>
    <recommendedName>
        <fullName>Hemoglobin subunit alpha</fullName>
    </recommendedName>
    <alternativeName>
        <fullName>Alpha-globin</fullName>
    </alternativeName>
    <alternativeName>
        <fullName>Hemoglobin alpha chain</fullName>
    </alternativeName>
    <component>
        <recommendedName>
            <fullName evidence="2">Hemopressin</fullName>
        </recommendedName>
    </component>
</protein>
<accession>P21200</accession>